<feature type="chain" id="PRO_0000307865" description="Putative beta-actin-like protein 3">
    <location>
        <begin position="1"/>
        <end position="375"/>
    </location>
</feature>
<feature type="modified residue" description="Methionine (R)-sulfoxide" evidence="1">
    <location>
        <position position="44"/>
    </location>
</feature>
<feature type="modified residue" description="Methionine (R)-sulfoxide" evidence="1">
    <location>
        <position position="47"/>
    </location>
</feature>
<feature type="modified residue" description="N6-methyllysine" evidence="3">
    <location>
        <position position="84"/>
    </location>
</feature>
<feature type="sequence conflict" description="In Ref. 2; AAX82286." evidence="4" ref="2">
    <original>F</original>
    <variation>V</variation>
    <location>
        <position position="159"/>
    </location>
</feature>
<feature type="sequence conflict" description="In Ref. 2; AAX82286." evidence="4" ref="2">
    <original>R</original>
    <variation>P</variation>
    <location>
        <position position="177"/>
    </location>
</feature>
<gene>
    <name type="primary">POTEKP</name>
    <name type="synonym">ACTBL3</name>
    <name type="ORF">FKSG30</name>
</gene>
<protein>
    <recommendedName>
        <fullName>Putative beta-actin-like protein 3</fullName>
    </recommendedName>
    <alternativeName>
        <fullName>Kappa-actin</fullName>
    </alternativeName>
    <alternativeName>
        <fullName>POTE ankyrin domain family member K</fullName>
    </alternativeName>
</protein>
<comment type="subunit">
    <text evidence="2">Interacts with PFN1 and PFDN1. Does not interact with PFN2.</text>
</comment>
<comment type="subcellular location">
    <subcellularLocation>
        <location evidence="1">Cytoplasm</location>
        <location evidence="1">Cytoskeleton</location>
    </subcellularLocation>
</comment>
<comment type="tissue specificity">
    <text evidence="2">Expressed in some hepatocellular carcinomas.</text>
</comment>
<comment type="PTM">
    <text evidence="1">Oxidation of Met-44 and Met-47 by MICALs (MICAL1, MICAL2 or MICAL3) to form methionine sulfoxide promotes actin filament depolymerization. MICAL1 and MICAL2 produce the (R)-S-oxide form. The (R)-S-oxide form is reverted by MSRB1 and MSRB2, which promote actin repolymerization (By similarity).</text>
</comment>
<comment type="PTM">
    <text>Monomethylation at Lys-84 (K84me1) regulates actin-myosin interaction and actomyosin-dependent processes. Demethylation by ALKBH4 is required for maintaining actomyosin dynamics supporting normal cleavage furrow ingression during cytokinesis and cell migration.</text>
</comment>
<comment type="similarity">
    <text evidence="4">Belongs to the actin family.</text>
</comment>
<comment type="caution">
    <text evidence="4">Could be the product of a pseudogene.</text>
</comment>
<sequence length="375" mass="42016">MDDDTAVLVIDNGSGMCKAGFAGDDAPQAVFPSIVGRPRHQGMMEGMHQKESYVGKEAQSKRGMLTLKYPMEHGIITNWDDMEKIWHHTFYNELRVAPEEHPILLTEAPLNPKANREKMTQIMFETFNTPAMYVAIQAVLSLYTSGRTTGIVMDSGDGFTHTVPIYEGNALPHATLRLDLAGRELTDYLMKILTERGYRFTTTAEQEIVRDIKEKLCYVALDSEQEMAMAASSSSVEKSYELPDGQVITIGNERFRCPEALFQPCFLGMESCGIHKTTFNSIVKSDVDIRKDLYTNTVLSGGTTMYPGIAHRMQKEITALAPSIMKIKIIAPPKRKYSVWVGGSILASLSTFQQMWISKQEYDESGPSIVHRKCF</sequence>
<dbReference type="EMBL" id="AY014272">
    <property type="protein sequence ID" value="AAG50355.1"/>
    <property type="molecule type" value="mRNA"/>
</dbReference>
<dbReference type="EMBL" id="AY970480">
    <property type="protein sequence ID" value="AAX82286.1"/>
    <property type="molecule type" value="Genomic_DNA"/>
</dbReference>
<dbReference type="SMR" id="Q9BYX7"/>
<dbReference type="FunCoup" id="Q9BYX7">
    <property type="interactions" value="346"/>
</dbReference>
<dbReference type="IntAct" id="Q9BYX7">
    <property type="interactions" value="43"/>
</dbReference>
<dbReference type="MINT" id="Q9BYX7"/>
<dbReference type="GlyGen" id="Q9BYX7">
    <property type="glycosylation" value="2 sites, 1 N-linked glycan (1 site), 1 O-linked glycan (1 site)"/>
</dbReference>
<dbReference type="iPTMnet" id="Q9BYX7"/>
<dbReference type="PhosphoSitePlus" id="Q9BYX7"/>
<dbReference type="SwissPalm" id="Q9BYX7"/>
<dbReference type="BioMuta" id="HGNC:30182"/>
<dbReference type="DMDM" id="74739412"/>
<dbReference type="jPOST" id="Q9BYX7"/>
<dbReference type="MassIVE" id="Q9BYX7"/>
<dbReference type="ProteomicsDB" id="79742"/>
<dbReference type="TopDownProteomics" id="Q9BYX7"/>
<dbReference type="AGR" id="HGNC:30182"/>
<dbReference type="GeneCards" id="POTEKP"/>
<dbReference type="HGNC" id="HGNC:30182">
    <property type="gene designation" value="POTEKP"/>
</dbReference>
<dbReference type="MIM" id="611266">
    <property type="type" value="gene"/>
</dbReference>
<dbReference type="neXtProt" id="NX_Q9BYX7"/>
<dbReference type="InParanoid" id="Q9BYX7"/>
<dbReference type="PAN-GO" id="Q9BYX7">
    <property type="GO annotations" value="2 GO annotations based on evolutionary models"/>
</dbReference>
<dbReference type="PathwayCommons" id="Q9BYX7"/>
<dbReference type="Reactome" id="R-HSA-114608">
    <property type="pathway name" value="Platelet degranulation"/>
</dbReference>
<dbReference type="SignaLink" id="Q9BYX7"/>
<dbReference type="Pharos" id="Q9BYX7">
    <property type="development level" value="Tdark"/>
</dbReference>
<dbReference type="PRO" id="PR:Q9BYX7"/>
<dbReference type="Proteomes" id="UP000005640">
    <property type="component" value="Unplaced"/>
</dbReference>
<dbReference type="RNAct" id="Q9BYX7">
    <property type="molecule type" value="protein"/>
</dbReference>
<dbReference type="GO" id="GO:0015629">
    <property type="term" value="C:actin cytoskeleton"/>
    <property type="evidence" value="ECO:0000318"/>
    <property type="project" value="GO_Central"/>
</dbReference>
<dbReference type="GO" id="GO:0005884">
    <property type="term" value="C:actin filament"/>
    <property type="evidence" value="ECO:0000318"/>
    <property type="project" value="GO_Central"/>
</dbReference>
<dbReference type="GO" id="GO:0030424">
    <property type="term" value="C:axon"/>
    <property type="evidence" value="ECO:0000318"/>
    <property type="project" value="GO_Central"/>
</dbReference>
<dbReference type="GO" id="GO:0005737">
    <property type="term" value="C:cytoplasm"/>
    <property type="evidence" value="ECO:0000318"/>
    <property type="project" value="GO_Central"/>
</dbReference>
<dbReference type="GO" id="GO:0005829">
    <property type="term" value="C:cytosol"/>
    <property type="evidence" value="ECO:0000304"/>
    <property type="project" value="Reactome"/>
</dbReference>
<dbReference type="GO" id="GO:0070062">
    <property type="term" value="C:extracellular exosome"/>
    <property type="evidence" value="ECO:0007005"/>
    <property type="project" value="UniProtKB"/>
</dbReference>
<dbReference type="GO" id="GO:0005576">
    <property type="term" value="C:extracellular region"/>
    <property type="evidence" value="ECO:0000304"/>
    <property type="project" value="Reactome"/>
</dbReference>
<dbReference type="GO" id="GO:0016020">
    <property type="term" value="C:membrane"/>
    <property type="evidence" value="ECO:0000318"/>
    <property type="project" value="GO_Central"/>
</dbReference>
<dbReference type="GO" id="GO:0035267">
    <property type="term" value="C:NuA4 histone acetyltransferase complex"/>
    <property type="evidence" value="ECO:0000318"/>
    <property type="project" value="GO_Central"/>
</dbReference>
<dbReference type="GO" id="GO:0045202">
    <property type="term" value="C:synapse"/>
    <property type="evidence" value="ECO:0000318"/>
    <property type="project" value="GO_Central"/>
</dbReference>
<dbReference type="GO" id="GO:0005524">
    <property type="term" value="F:ATP binding"/>
    <property type="evidence" value="ECO:0007669"/>
    <property type="project" value="UniProtKB-KW"/>
</dbReference>
<dbReference type="GO" id="GO:0019901">
    <property type="term" value="F:protein kinase binding"/>
    <property type="evidence" value="ECO:0000318"/>
    <property type="project" value="GO_Central"/>
</dbReference>
<dbReference type="GO" id="GO:0098973">
    <property type="term" value="F:structural constituent of postsynaptic actin cytoskeleton"/>
    <property type="evidence" value="ECO:0000318"/>
    <property type="project" value="GO_Central"/>
</dbReference>
<dbReference type="GO" id="GO:0007409">
    <property type="term" value="P:axonogenesis"/>
    <property type="evidence" value="ECO:0000318"/>
    <property type="project" value="GO_Central"/>
</dbReference>
<dbReference type="GO" id="GO:0048870">
    <property type="term" value="P:cell motility"/>
    <property type="evidence" value="ECO:0000318"/>
    <property type="project" value="GO_Central"/>
</dbReference>
<dbReference type="CDD" id="cd10224">
    <property type="entry name" value="ASKHA_NBD_actin"/>
    <property type="match status" value="1"/>
</dbReference>
<dbReference type="FunFam" id="3.30.420.40:FF:000291">
    <property type="entry name" value="Actin, alpha skeletal muscle"/>
    <property type="match status" value="1"/>
</dbReference>
<dbReference type="FunFam" id="3.90.640.10:FF:000047">
    <property type="entry name" value="Actin, alpha skeletal muscle"/>
    <property type="match status" value="1"/>
</dbReference>
<dbReference type="FunFam" id="3.30.420.40:FF:000404">
    <property type="entry name" value="Major actin"/>
    <property type="match status" value="1"/>
</dbReference>
<dbReference type="FunFam" id="3.30.420.40:FF:000058">
    <property type="entry name" value="Putative actin-related protein 5"/>
    <property type="match status" value="1"/>
</dbReference>
<dbReference type="Gene3D" id="3.30.420.40">
    <property type="match status" value="2"/>
</dbReference>
<dbReference type="Gene3D" id="3.90.640.10">
    <property type="entry name" value="Actin, Chain A, domain 4"/>
    <property type="match status" value="1"/>
</dbReference>
<dbReference type="InterPro" id="IPR004000">
    <property type="entry name" value="Actin"/>
</dbReference>
<dbReference type="InterPro" id="IPR020902">
    <property type="entry name" value="Actin/actin-like_CS"/>
</dbReference>
<dbReference type="InterPro" id="IPR004001">
    <property type="entry name" value="Actin_CS"/>
</dbReference>
<dbReference type="InterPro" id="IPR043129">
    <property type="entry name" value="ATPase_NBD"/>
</dbReference>
<dbReference type="PANTHER" id="PTHR11937">
    <property type="entry name" value="ACTIN"/>
    <property type="match status" value="1"/>
</dbReference>
<dbReference type="Pfam" id="PF00022">
    <property type="entry name" value="Actin"/>
    <property type="match status" value="1"/>
</dbReference>
<dbReference type="PRINTS" id="PR00190">
    <property type="entry name" value="ACTIN"/>
</dbReference>
<dbReference type="SMART" id="SM00268">
    <property type="entry name" value="ACTIN"/>
    <property type="match status" value="1"/>
</dbReference>
<dbReference type="SUPFAM" id="SSF53067">
    <property type="entry name" value="Actin-like ATPase domain"/>
    <property type="match status" value="2"/>
</dbReference>
<dbReference type="PROSITE" id="PS00432">
    <property type="entry name" value="ACTINS_2"/>
    <property type="match status" value="1"/>
</dbReference>
<dbReference type="PROSITE" id="PS01132">
    <property type="entry name" value="ACTINS_ACT_LIKE"/>
    <property type="match status" value="1"/>
</dbReference>
<organism>
    <name type="scientific">Homo sapiens</name>
    <name type="common">Human</name>
    <dbReference type="NCBI Taxonomy" id="9606"/>
    <lineage>
        <taxon>Eukaryota</taxon>
        <taxon>Metazoa</taxon>
        <taxon>Chordata</taxon>
        <taxon>Craniata</taxon>
        <taxon>Vertebrata</taxon>
        <taxon>Euteleostomi</taxon>
        <taxon>Mammalia</taxon>
        <taxon>Eutheria</taxon>
        <taxon>Euarchontoglires</taxon>
        <taxon>Primates</taxon>
        <taxon>Haplorrhini</taxon>
        <taxon>Catarrhini</taxon>
        <taxon>Hominidae</taxon>
        <taxon>Homo</taxon>
    </lineage>
</organism>
<accession>Q9BYX7</accession>
<accession>Q562N5</accession>
<keyword id="KW-0067">ATP-binding</keyword>
<keyword id="KW-0963">Cytoplasm</keyword>
<keyword id="KW-0206">Cytoskeleton</keyword>
<keyword id="KW-0488">Methylation</keyword>
<keyword id="KW-0547">Nucleotide-binding</keyword>
<keyword id="KW-0558">Oxidation</keyword>
<keyword id="KW-1267">Proteomics identification</keyword>
<keyword id="KW-1185">Reference proteome</keyword>
<name>ACTBM_HUMAN</name>
<evidence type="ECO:0000250" key="1"/>
<evidence type="ECO:0000269" key="2">
    <source>
    </source>
</evidence>
<evidence type="ECO:0000269" key="3">
    <source>
    </source>
</evidence>
<evidence type="ECO:0000305" key="4"/>
<proteinExistence type="uncertain"/>
<reference key="1">
    <citation type="submission" date="2000-11" db="EMBL/GenBank/DDBJ databases">
        <title>Cloning and characterization of FKSG30, a novel gene encoding a protein similar to ACTG1.</title>
        <authorList>
            <person name="Wang Y.-G."/>
            <person name="Gong L."/>
        </authorList>
    </citation>
    <scope>NUCLEOTIDE SEQUENCE [MRNA]</scope>
</reference>
<reference key="2">
    <citation type="journal article" date="2006" name="Hepatol. Res.">
        <title>Identification of a novel actin isoform in hepatocellular carcinoma.</title>
        <authorList>
            <person name="Chang K.-W."/>
            <person name="Yang P.-Y."/>
            <person name="Lai H.-Y."/>
            <person name="Yeh T.-S."/>
            <person name="Chen T.-C."/>
            <person name="Yeh C.-T."/>
        </authorList>
    </citation>
    <scope>NUCLEOTIDE SEQUENCE [GENOMIC DNA] OF 84-186</scope>
    <scope>INTERACTION WITH PFN1 AND PFDN1</scope>
    <scope>TISSUE SPECIFICITY</scope>
    <source>
        <tissue>Liver</tissue>
    </source>
</reference>
<reference key="3">
    <citation type="journal article" date="2013" name="Nat. Commun.">
        <title>ALKBH4-dependent demethylation of actin regulates actomyosin dynamics.</title>
        <authorList>
            <person name="Li M.M."/>
            <person name="Nilsen A."/>
            <person name="Shi Y."/>
            <person name="Fusser M."/>
            <person name="Ding Y.H."/>
            <person name="Fu Y."/>
            <person name="Liu B."/>
            <person name="Niu Y."/>
            <person name="Wu Y.S."/>
            <person name="Huang C.M."/>
            <person name="Olofsson M."/>
            <person name="Jin K.X."/>
            <person name="Lv Y."/>
            <person name="Xu X.Z."/>
            <person name="He C."/>
            <person name="Dong M.Q."/>
            <person name="Rendtlew Danielsen J.M."/>
            <person name="Klungland A."/>
            <person name="Yang Y.G."/>
        </authorList>
    </citation>
    <scope>METHYLATION AT LYS-84</scope>
    <scope>DEMETHYLATION BY ALKBH4</scope>
</reference>